<accession>Q15056</accession>
<accession>A8K3R1</accession>
<accession>D3DXF6</accession>
<accession>D3DXF8</accession>
<reference key="1">
    <citation type="journal article" date="1996" name="Genomics">
        <title>Identification of genes from a 500-kb region at 7q11.23 that is commonly deleted in Williams syndrome patients.</title>
        <authorList>
            <person name="Osborne L.R."/>
            <person name="Martindale D.W."/>
            <person name="Scherer S.W."/>
            <person name="Shi X.-M."/>
            <person name="Huizenga J."/>
            <person name="Heng H.H.Q."/>
            <person name="Costa T."/>
            <person name="Pober B."/>
            <person name="Lew L."/>
            <person name="Brinkman J."/>
            <person name="Rommens J."/>
            <person name="Koop B.F."/>
            <person name="Tsui L.-C."/>
        </authorList>
    </citation>
    <scope>NUCLEOTIDE SEQUENCE [GENOMIC DNA] (ISOFORM SHORT)</scope>
    <scope>TISSUE SPECIFICITY</scope>
    <scope>POSSIBLE INVOLVEMENT IN WBS</scope>
    <source>
        <tissue>Fetal brain</tissue>
    </source>
</reference>
<reference key="2">
    <citation type="journal article" date="2000" name="Mamm. Genome">
        <title>Comparative genomic sequence analysis of the Williams syndrome region (LIMK1-RFC2) of human chromosome 7q11.23.</title>
        <authorList>
            <person name="Martindale D.W."/>
            <person name="Wilson M.D."/>
            <person name="Wang D."/>
            <person name="Burke R.D."/>
            <person name="Chen X."/>
            <person name="Duronio V."/>
            <person name="Koop B.F."/>
        </authorList>
    </citation>
    <scope>NUCLEOTIDE SEQUENCE [GENOMIC DNA]</scope>
    <scope>ALTERNATIVE SPLICING</scope>
    <scope>TISSUE SPECIFICITY</scope>
</reference>
<reference key="3">
    <citation type="journal article" date="1994" name="DNA Res.">
        <title>Prediction of the coding sequences of unidentified human genes. I. The coding sequences of 40 new genes (KIAA0001-KIAA0040) deduced by analysis of randomly sampled cDNA clones from human immature myeloid cell line KG-1.</title>
        <authorList>
            <person name="Nomura N."/>
            <person name="Miyajima N."/>
            <person name="Sazuka T."/>
            <person name="Tanaka A."/>
            <person name="Kawarabayasi Y."/>
            <person name="Sato S."/>
            <person name="Nagase T."/>
            <person name="Seki N."/>
            <person name="Ishikawa K."/>
            <person name="Tabata S."/>
        </authorList>
    </citation>
    <scope>NUCLEOTIDE SEQUENCE [LARGE SCALE MRNA] (ISOFORM SHORT)</scope>
    <source>
        <tissue>Bone marrow</tissue>
    </source>
</reference>
<reference key="4">
    <citation type="journal article" date="2004" name="Nat. Genet.">
        <title>Complete sequencing and characterization of 21,243 full-length human cDNAs.</title>
        <authorList>
            <person name="Ota T."/>
            <person name="Suzuki Y."/>
            <person name="Nishikawa T."/>
            <person name="Otsuki T."/>
            <person name="Sugiyama T."/>
            <person name="Irie R."/>
            <person name="Wakamatsu A."/>
            <person name="Hayashi K."/>
            <person name="Sato H."/>
            <person name="Nagai K."/>
            <person name="Kimura K."/>
            <person name="Makita H."/>
            <person name="Sekine M."/>
            <person name="Obayashi M."/>
            <person name="Nishi T."/>
            <person name="Shibahara T."/>
            <person name="Tanaka T."/>
            <person name="Ishii S."/>
            <person name="Yamamoto J."/>
            <person name="Saito K."/>
            <person name="Kawai Y."/>
            <person name="Isono Y."/>
            <person name="Nakamura Y."/>
            <person name="Nagahari K."/>
            <person name="Murakami K."/>
            <person name="Yasuda T."/>
            <person name="Iwayanagi T."/>
            <person name="Wagatsuma M."/>
            <person name="Shiratori A."/>
            <person name="Sudo H."/>
            <person name="Hosoiri T."/>
            <person name="Kaku Y."/>
            <person name="Kodaira H."/>
            <person name="Kondo H."/>
            <person name="Sugawara M."/>
            <person name="Takahashi M."/>
            <person name="Kanda K."/>
            <person name="Yokoi T."/>
            <person name="Furuya T."/>
            <person name="Kikkawa E."/>
            <person name="Omura Y."/>
            <person name="Abe K."/>
            <person name="Kamihara K."/>
            <person name="Katsuta N."/>
            <person name="Sato K."/>
            <person name="Tanikawa M."/>
            <person name="Yamazaki M."/>
            <person name="Ninomiya K."/>
            <person name="Ishibashi T."/>
            <person name="Yamashita H."/>
            <person name="Murakawa K."/>
            <person name="Fujimori K."/>
            <person name="Tanai H."/>
            <person name="Kimata M."/>
            <person name="Watanabe M."/>
            <person name="Hiraoka S."/>
            <person name="Chiba Y."/>
            <person name="Ishida S."/>
            <person name="Ono Y."/>
            <person name="Takiguchi S."/>
            <person name="Watanabe S."/>
            <person name="Yosida M."/>
            <person name="Hotuta T."/>
            <person name="Kusano J."/>
            <person name="Kanehori K."/>
            <person name="Takahashi-Fujii A."/>
            <person name="Hara H."/>
            <person name="Tanase T.-O."/>
            <person name="Nomura Y."/>
            <person name="Togiya S."/>
            <person name="Komai F."/>
            <person name="Hara R."/>
            <person name="Takeuchi K."/>
            <person name="Arita M."/>
            <person name="Imose N."/>
            <person name="Musashino K."/>
            <person name="Yuuki H."/>
            <person name="Oshima A."/>
            <person name="Sasaki N."/>
            <person name="Aotsuka S."/>
            <person name="Yoshikawa Y."/>
            <person name="Matsunawa H."/>
            <person name="Ichihara T."/>
            <person name="Shiohata N."/>
            <person name="Sano S."/>
            <person name="Moriya S."/>
            <person name="Momiyama H."/>
            <person name="Satoh N."/>
            <person name="Takami S."/>
            <person name="Terashima Y."/>
            <person name="Suzuki O."/>
            <person name="Nakagawa S."/>
            <person name="Senoh A."/>
            <person name="Mizoguchi H."/>
            <person name="Goto Y."/>
            <person name="Shimizu F."/>
            <person name="Wakebe H."/>
            <person name="Hishigaki H."/>
            <person name="Watanabe T."/>
            <person name="Sugiyama A."/>
            <person name="Takemoto M."/>
            <person name="Kawakami B."/>
            <person name="Yamazaki M."/>
            <person name="Watanabe K."/>
            <person name="Kumagai A."/>
            <person name="Itakura S."/>
            <person name="Fukuzumi Y."/>
            <person name="Fujimori Y."/>
            <person name="Komiyama M."/>
            <person name="Tashiro H."/>
            <person name="Tanigami A."/>
            <person name="Fujiwara T."/>
            <person name="Ono T."/>
            <person name="Yamada K."/>
            <person name="Fujii Y."/>
            <person name="Ozaki K."/>
            <person name="Hirao M."/>
            <person name="Ohmori Y."/>
            <person name="Kawabata A."/>
            <person name="Hikiji T."/>
            <person name="Kobatake N."/>
            <person name="Inagaki H."/>
            <person name="Ikema Y."/>
            <person name="Okamoto S."/>
            <person name="Okitani R."/>
            <person name="Kawakami T."/>
            <person name="Noguchi S."/>
            <person name="Itoh T."/>
            <person name="Shigeta K."/>
            <person name="Senba T."/>
            <person name="Matsumura K."/>
            <person name="Nakajima Y."/>
            <person name="Mizuno T."/>
            <person name="Morinaga M."/>
            <person name="Sasaki M."/>
            <person name="Togashi T."/>
            <person name="Oyama M."/>
            <person name="Hata H."/>
            <person name="Watanabe M."/>
            <person name="Komatsu T."/>
            <person name="Mizushima-Sugano J."/>
            <person name="Satoh T."/>
            <person name="Shirai Y."/>
            <person name="Takahashi Y."/>
            <person name="Nakagawa K."/>
            <person name="Okumura K."/>
            <person name="Nagase T."/>
            <person name="Nomura N."/>
            <person name="Kikuchi H."/>
            <person name="Masuho Y."/>
            <person name="Yamashita R."/>
            <person name="Nakai K."/>
            <person name="Yada T."/>
            <person name="Nakamura Y."/>
            <person name="Ohara O."/>
            <person name="Isogai T."/>
            <person name="Sugano S."/>
        </authorList>
    </citation>
    <scope>NUCLEOTIDE SEQUENCE [LARGE SCALE MRNA] (ISOFORM SHORT)</scope>
</reference>
<reference key="5">
    <citation type="submission" date="2005-09" db="EMBL/GenBank/DDBJ databases">
        <authorList>
            <person name="Mural R.J."/>
            <person name="Istrail S."/>
            <person name="Sutton G.G."/>
            <person name="Florea L."/>
            <person name="Halpern A.L."/>
            <person name="Mobarry C.M."/>
            <person name="Lippert R."/>
            <person name="Walenz B."/>
            <person name="Shatkay H."/>
            <person name="Dew I."/>
            <person name="Miller J.R."/>
            <person name="Flanigan M.J."/>
            <person name="Edwards N.J."/>
            <person name="Bolanos R."/>
            <person name="Fasulo D."/>
            <person name="Halldorsson B.V."/>
            <person name="Hannenhalli S."/>
            <person name="Turner R."/>
            <person name="Yooseph S."/>
            <person name="Lu F."/>
            <person name="Nusskern D.R."/>
            <person name="Shue B.C."/>
            <person name="Zheng X.H."/>
            <person name="Zhong F."/>
            <person name="Delcher A.L."/>
            <person name="Huson D.H."/>
            <person name="Kravitz S.A."/>
            <person name="Mouchard L."/>
            <person name="Reinert K."/>
            <person name="Remington K.A."/>
            <person name="Clark A.G."/>
            <person name="Waterman M.S."/>
            <person name="Eichler E.E."/>
            <person name="Adams M.D."/>
            <person name="Hunkapiller M.W."/>
            <person name="Myers E.W."/>
            <person name="Venter J.C."/>
        </authorList>
    </citation>
    <scope>NUCLEOTIDE SEQUENCE [LARGE SCALE GENOMIC DNA]</scope>
</reference>
<reference key="6">
    <citation type="journal article" date="2004" name="Genome Res.">
        <title>The status, quality, and expansion of the NIH full-length cDNA project: the Mammalian Gene Collection (MGC).</title>
        <authorList>
            <consortium name="The MGC Project Team"/>
        </authorList>
    </citation>
    <scope>NUCLEOTIDE SEQUENCE [LARGE SCALE MRNA] (ISOFORM SHORT)</scope>
    <source>
        <tissue>Brain</tissue>
        <tissue>Muscle</tissue>
    </source>
</reference>
<reference key="7">
    <citation type="journal article" date="2003" name="Nat. Biotechnol.">
        <title>Exploring proteomes and analyzing protein processing by mass spectrometric identification of sorted N-terminal peptides.</title>
        <authorList>
            <person name="Gevaert K."/>
            <person name="Goethals M."/>
            <person name="Martens L."/>
            <person name="Van Damme J."/>
            <person name="Staes A."/>
            <person name="Thomas G.R."/>
            <person name="Vandekerckhove J."/>
        </authorList>
    </citation>
    <scope>PROTEIN SEQUENCE OF 2-10</scope>
    <scope>ACETYLATION AT ALA-2</scope>
    <source>
        <tissue>Platelet</tissue>
    </source>
</reference>
<reference key="8">
    <citation type="journal article" date="1998" name="J. Biol. Chem.">
        <title>Purification and characterization of a new eukaryotic protein translation factor. Eukaryotic initiation factor 4H.</title>
        <authorList>
            <person name="Richter-Cook N.J."/>
            <person name="Dever T.E."/>
            <person name="Hensold J.O."/>
            <person name="Merrick W.C."/>
        </authorList>
    </citation>
    <scope>PARTIAL PROTEIN SEQUENCE</scope>
    <scope>CHARACTERIZATION</scope>
</reference>
<reference key="9">
    <citation type="journal article" date="1999" name="J. Biol. Chem.">
        <title>Further biochemical and kinetic characterization of human eukaryotic initiation factor 4H.</title>
        <authorList>
            <person name="Richter N.J."/>
            <person name="Rogers G.W. Jr."/>
            <person name="Hensold J.O."/>
            <person name="Merrick W.C."/>
        </authorList>
    </citation>
    <scope>FUNCTION</scope>
</reference>
<reference key="10">
    <citation type="journal article" date="2001" name="J. Biol. Chem.">
        <title>Modulation of the helicase activity of eIF4A by eIF4B, eIF4H, and eIF4F.</title>
        <authorList>
            <person name="Rogers G.W. Jr."/>
            <person name="Richter N.J."/>
            <person name="Lima W.F."/>
            <person name="Merrick W.C."/>
        </authorList>
    </citation>
    <scope>FUNCTION</scope>
</reference>
<reference key="11">
    <citation type="journal article" date="2005" name="J. Virol.">
        <title>mRNA decay during herpes simplex virus (HSV) infections: protein-protein interactions involving the HSV virion host shutoff protein and translation factors eIF4H and eIF4A.</title>
        <authorList>
            <person name="Feng P."/>
            <person name="Everly D.N. Jr."/>
            <person name="Read G.S."/>
        </authorList>
    </citation>
    <scope>INTERACTION WITH HHV-1 VHS (MICROBIAL INFECTION)</scope>
</reference>
<reference key="12">
    <citation type="journal article" date="2005" name="Nat. Biotechnol.">
        <title>Immunoaffinity profiling of tyrosine phosphorylation in cancer cells.</title>
        <authorList>
            <person name="Rush J."/>
            <person name="Moritz A."/>
            <person name="Lee K.A."/>
            <person name="Guo A."/>
            <person name="Goss V.L."/>
            <person name="Spek E.J."/>
            <person name="Zhang H."/>
            <person name="Zha X.-M."/>
            <person name="Polakiewicz R.D."/>
            <person name="Comb M.J."/>
        </authorList>
    </citation>
    <scope>IDENTIFICATION BY MASS SPECTROMETRY [LARGE SCALE ANALYSIS]</scope>
</reference>
<reference key="13">
    <citation type="journal article" date="2009" name="Anal. Chem.">
        <title>Lys-N and trypsin cover complementary parts of the phosphoproteome in a refined SCX-based approach.</title>
        <authorList>
            <person name="Gauci S."/>
            <person name="Helbig A.O."/>
            <person name="Slijper M."/>
            <person name="Krijgsveld J."/>
            <person name="Heck A.J."/>
            <person name="Mohammed S."/>
        </authorList>
    </citation>
    <scope>ACETYLATION [LARGE SCALE ANALYSIS] AT ALA-2</scope>
    <scope>CLEAVAGE OF INITIATOR METHIONINE [LARGE SCALE ANALYSIS]</scope>
    <scope>IDENTIFICATION BY MASS SPECTROMETRY [LARGE SCALE ANALYSIS]</scope>
</reference>
<reference key="14">
    <citation type="journal article" date="2009" name="Sci. Signal.">
        <title>Quantitative phosphoproteomic analysis of T cell receptor signaling reveals system-wide modulation of protein-protein interactions.</title>
        <authorList>
            <person name="Mayya V."/>
            <person name="Lundgren D.H."/>
            <person name="Hwang S.-I."/>
            <person name="Rezaul K."/>
            <person name="Wu L."/>
            <person name="Eng J.K."/>
            <person name="Rodionov V."/>
            <person name="Han D.K."/>
        </authorList>
    </citation>
    <scope>PHOSPHORYLATION [LARGE SCALE ANALYSIS] AT SER-32</scope>
    <scope>IDENTIFICATION BY MASS SPECTROMETRY [LARGE SCALE ANALYSIS]</scope>
    <source>
        <tissue>Leukemic T-cell</tissue>
    </source>
</reference>
<reference key="15">
    <citation type="journal article" date="2010" name="Sci. Signal.">
        <title>Quantitative phosphoproteomics reveals widespread full phosphorylation site occupancy during mitosis.</title>
        <authorList>
            <person name="Olsen J.V."/>
            <person name="Vermeulen M."/>
            <person name="Santamaria A."/>
            <person name="Kumar C."/>
            <person name="Miller M.L."/>
            <person name="Jensen L.J."/>
            <person name="Gnad F."/>
            <person name="Cox J."/>
            <person name="Jensen T.S."/>
            <person name="Nigg E.A."/>
            <person name="Brunak S."/>
            <person name="Mann M."/>
        </authorList>
    </citation>
    <scope>PHOSPHORYLATION [LARGE SCALE ANALYSIS] AT SER-21 AND SER-24</scope>
    <scope>IDENTIFICATION BY MASS SPECTROMETRY [LARGE SCALE ANALYSIS]</scope>
    <source>
        <tissue>Cervix carcinoma</tissue>
    </source>
</reference>
<reference key="16">
    <citation type="journal article" date="2011" name="BMC Syst. Biol.">
        <title>Initial characterization of the human central proteome.</title>
        <authorList>
            <person name="Burkard T.R."/>
            <person name="Planyavsky M."/>
            <person name="Kaupe I."/>
            <person name="Breitwieser F.P."/>
            <person name="Buerckstuemmer T."/>
            <person name="Bennett K.L."/>
            <person name="Superti-Furga G."/>
            <person name="Colinge J."/>
        </authorList>
    </citation>
    <scope>IDENTIFICATION BY MASS SPECTROMETRY [LARGE SCALE ANALYSIS]</scope>
</reference>
<reference key="17">
    <citation type="journal article" date="2011" name="Sci. Signal.">
        <title>System-wide temporal characterization of the proteome and phosphoproteome of human embryonic stem cell differentiation.</title>
        <authorList>
            <person name="Rigbolt K.T."/>
            <person name="Prokhorova T.A."/>
            <person name="Akimov V."/>
            <person name="Henningsen J."/>
            <person name="Johansen P.T."/>
            <person name="Kratchmarova I."/>
            <person name="Kassem M."/>
            <person name="Mann M."/>
            <person name="Olsen J.V."/>
            <person name="Blagoev B."/>
        </authorList>
    </citation>
    <scope>PHOSPHORYLATION [LARGE SCALE ANALYSIS] AT SER-21 AND SER-24</scope>
    <scope>IDENTIFICATION BY MASS SPECTROMETRY [LARGE SCALE ANALYSIS]</scope>
</reference>
<reference key="18">
    <citation type="journal article" date="2012" name="Mol. Cell. Proteomics">
        <title>Comparative large-scale characterisation of plant vs. mammal proteins reveals similar and idiosyncratic N-alpha acetylation features.</title>
        <authorList>
            <person name="Bienvenut W.V."/>
            <person name="Sumpton D."/>
            <person name="Martinez A."/>
            <person name="Lilla S."/>
            <person name="Espagne C."/>
            <person name="Meinnel T."/>
            <person name="Giglione C."/>
        </authorList>
    </citation>
    <scope>ACETYLATION [LARGE SCALE ANALYSIS] AT ALA-2</scope>
    <scope>CLEAVAGE OF INITIATOR METHIONINE [LARGE SCALE ANALYSIS]</scope>
    <scope>IDENTIFICATION BY MASS SPECTROMETRY [LARGE SCALE ANALYSIS]</scope>
</reference>
<reference key="19">
    <citation type="journal article" date="2012" name="Proc. Natl. Acad. Sci. U.S.A.">
        <title>N-terminal acetylome analyses and functional insights of the N-terminal acetyltransferase NatB.</title>
        <authorList>
            <person name="Van Damme P."/>
            <person name="Lasa M."/>
            <person name="Polevoda B."/>
            <person name="Gazquez C."/>
            <person name="Elosegui-Artola A."/>
            <person name="Kim D.S."/>
            <person name="De Juan-Pardo E."/>
            <person name="Demeyer K."/>
            <person name="Hole K."/>
            <person name="Larrea E."/>
            <person name="Timmerman E."/>
            <person name="Prieto J."/>
            <person name="Arnesen T."/>
            <person name="Sherman F."/>
            <person name="Gevaert K."/>
            <person name="Aldabe R."/>
        </authorList>
    </citation>
    <scope>ACETYLATION [LARGE SCALE ANALYSIS] AT ALA-2</scope>
    <scope>CLEAVAGE OF INITIATOR METHIONINE [LARGE SCALE ANALYSIS]</scope>
    <scope>IDENTIFICATION BY MASS SPECTROMETRY [LARGE SCALE ANALYSIS]</scope>
</reference>
<reference key="20">
    <citation type="journal article" date="2013" name="J. Proteome Res.">
        <title>Toward a comprehensive characterization of a human cancer cell phosphoproteome.</title>
        <authorList>
            <person name="Zhou H."/>
            <person name="Di Palma S."/>
            <person name="Preisinger C."/>
            <person name="Peng M."/>
            <person name="Polat A.N."/>
            <person name="Heck A.J."/>
            <person name="Mohammed S."/>
        </authorList>
    </citation>
    <scope>PHOSPHORYLATION [LARGE SCALE ANALYSIS] AT SER-13; SER-14; SER-21; SER-24 AND SER-230</scope>
    <scope>IDENTIFICATION BY MASS SPECTROMETRY [LARGE SCALE ANALYSIS]</scope>
    <source>
        <tissue>Cervix carcinoma</tissue>
        <tissue>Erythroleukemia</tissue>
    </source>
</reference>
<reference key="21">
    <citation type="journal article" date="2014" name="J. Proteomics">
        <title>An enzyme assisted RP-RPLC approach for in-depth analysis of human liver phosphoproteome.</title>
        <authorList>
            <person name="Bian Y."/>
            <person name="Song C."/>
            <person name="Cheng K."/>
            <person name="Dong M."/>
            <person name="Wang F."/>
            <person name="Huang J."/>
            <person name="Sun D."/>
            <person name="Wang L."/>
            <person name="Ye M."/>
            <person name="Zou H."/>
        </authorList>
    </citation>
    <scope>IDENTIFICATION BY MASS SPECTROMETRY [LARGE SCALE ANALYSIS]</scope>
    <source>
        <tissue>Liver</tissue>
    </source>
</reference>
<reference key="22">
    <citation type="journal article" date="2014" name="Mol. Cell. Proteomics">
        <title>Immunoaffinity enrichment and mass spectrometry analysis of protein methylation.</title>
        <authorList>
            <person name="Guo A."/>
            <person name="Gu H."/>
            <person name="Zhou J."/>
            <person name="Mulhern D."/>
            <person name="Wang Y."/>
            <person name="Lee K.A."/>
            <person name="Yang V."/>
            <person name="Aguiar M."/>
            <person name="Kornhauser J."/>
            <person name="Jia X."/>
            <person name="Ren J."/>
            <person name="Beausoleil S.A."/>
            <person name="Silva J.C."/>
            <person name="Vemulapalli V."/>
            <person name="Bedford M.T."/>
            <person name="Comb M.J."/>
        </authorList>
    </citation>
    <scope>METHYLATION [LARGE SCALE ANALYSIS] AT ARG-166</scope>
    <scope>IDENTIFICATION BY MASS SPECTROMETRY [LARGE SCALE ANALYSIS]</scope>
    <source>
        <tissue>Colon carcinoma</tissue>
    </source>
</reference>
<reference key="23">
    <citation type="journal article" date="2015" name="Proteomics">
        <title>N-terminome analysis of the human mitochondrial proteome.</title>
        <authorList>
            <person name="Vaca Jacome A.S."/>
            <person name="Rabilloud T."/>
            <person name="Schaeffer-Reiss C."/>
            <person name="Rompais M."/>
            <person name="Ayoub D."/>
            <person name="Lane L."/>
            <person name="Bairoch A."/>
            <person name="Van Dorsselaer A."/>
            <person name="Carapito C."/>
        </authorList>
    </citation>
    <scope>IDENTIFICATION BY MASS SPECTROMETRY [LARGE SCALE ANALYSIS]</scope>
</reference>
<organism>
    <name type="scientific">Homo sapiens</name>
    <name type="common">Human</name>
    <dbReference type="NCBI Taxonomy" id="9606"/>
    <lineage>
        <taxon>Eukaryota</taxon>
        <taxon>Metazoa</taxon>
        <taxon>Chordata</taxon>
        <taxon>Craniata</taxon>
        <taxon>Vertebrata</taxon>
        <taxon>Euteleostomi</taxon>
        <taxon>Mammalia</taxon>
        <taxon>Eutheria</taxon>
        <taxon>Euarchontoglires</taxon>
        <taxon>Primates</taxon>
        <taxon>Haplorrhini</taxon>
        <taxon>Catarrhini</taxon>
        <taxon>Hominidae</taxon>
        <taxon>Homo</taxon>
    </lineage>
</organism>
<name>IF4H_HUMAN</name>
<gene>
    <name type="primary">EIF4H</name>
    <name type="synonym">KIAA0038</name>
    <name type="synonym">WBSCR1</name>
    <name type="synonym">WSCR1</name>
</gene>
<dbReference type="EMBL" id="AF045555">
    <property type="protein sequence ID" value="AAF75557.1"/>
    <property type="molecule type" value="Genomic_DNA"/>
</dbReference>
<dbReference type="EMBL" id="AF045555">
    <property type="protein sequence ID" value="AAC04859.2"/>
    <property type="molecule type" value="Genomic_DNA"/>
</dbReference>
<dbReference type="EMBL" id="D26068">
    <property type="protein sequence ID" value="BAA05063.1"/>
    <property type="status" value="ALT_INIT"/>
    <property type="molecule type" value="mRNA"/>
</dbReference>
<dbReference type="EMBL" id="AK290676">
    <property type="protein sequence ID" value="BAF83365.1"/>
    <property type="molecule type" value="mRNA"/>
</dbReference>
<dbReference type="EMBL" id="CH471200">
    <property type="protein sequence ID" value="EAW69616.1"/>
    <property type="molecule type" value="Genomic_DNA"/>
</dbReference>
<dbReference type="EMBL" id="CH471200">
    <property type="protein sequence ID" value="EAW69615.1"/>
    <property type="molecule type" value="Genomic_DNA"/>
</dbReference>
<dbReference type="EMBL" id="CH471200">
    <property type="protein sequence ID" value="EAW69617.1"/>
    <property type="molecule type" value="Genomic_DNA"/>
</dbReference>
<dbReference type="EMBL" id="CH471200">
    <property type="protein sequence ID" value="EAW69618.1"/>
    <property type="molecule type" value="Genomic_DNA"/>
</dbReference>
<dbReference type="EMBL" id="CH471200">
    <property type="protein sequence ID" value="EAW69619.1"/>
    <property type="molecule type" value="Genomic_DNA"/>
</dbReference>
<dbReference type="EMBL" id="BC010021">
    <property type="protein sequence ID" value="AAH10021.1"/>
    <property type="molecule type" value="mRNA"/>
</dbReference>
<dbReference type="EMBL" id="BC021214">
    <property type="protein sequence ID" value="AAH21214.1"/>
    <property type="molecule type" value="mRNA"/>
</dbReference>
<dbReference type="EMBL" id="BC066928">
    <property type="protein sequence ID" value="AAH66928.1"/>
    <property type="molecule type" value="mRNA"/>
</dbReference>
<dbReference type="CCDS" id="CCDS5564.1">
    <molecule id="Q15056-1"/>
</dbReference>
<dbReference type="CCDS" id="CCDS5565.1">
    <molecule id="Q15056-2"/>
</dbReference>
<dbReference type="RefSeq" id="NP_071496.1">
    <molecule id="Q15056-1"/>
    <property type="nucleotide sequence ID" value="NM_022170.2"/>
</dbReference>
<dbReference type="RefSeq" id="NP_114381.1">
    <molecule id="Q15056-2"/>
    <property type="nucleotide sequence ID" value="NM_031992.2"/>
</dbReference>
<dbReference type="SMR" id="Q15056"/>
<dbReference type="BioGRID" id="113297">
    <property type="interactions" value="128"/>
</dbReference>
<dbReference type="FunCoup" id="Q15056">
    <property type="interactions" value="2185"/>
</dbReference>
<dbReference type="IntAct" id="Q15056">
    <property type="interactions" value="47"/>
</dbReference>
<dbReference type="MINT" id="Q15056"/>
<dbReference type="STRING" id="9606.ENSP00000265753"/>
<dbReference type="BindingDB" id="Q15056"/>
<dbReference type="ChEMBL" id="CHEMBL1293274"/>
<dbReference type="GlyCosmos" id="Q15056">
    <property type="glycosylation" value="1 site, 1 glycan"/>
</dbReference>
<dbReference type="GlyGen" id="Q15056">
    <property type="glycosylation" value="4 sites, 1 O-linked glycan (4 sites)"/>
</dbReference>
<dbReference type="iPTMnet" id="Q15056"/>
<dbReference type="MetOSite" id="Q15056"/>
<dbReference type="PhosphoSitePlus" id="Q15056"/>
<dbReference type="SwissPalm" id="Q15056"/>
<dbReference type="BioMuta" id="EIF4H"/>
<dbReference type="DMDM" id="18276665"/>
<dbReference type="jPOST" id="Q15056"/>
<dbReference type="MassIVE" id="Q15056"/>
<dbReference type="PaxDb" id="9606-ENSP00000265753"/>
<dbReference type="PeptideAtlas" id="Q15056"/>
<dbReference type="ProteomicsDB" id="60410">
    <molecule id="Q15056-1"/>
</dbReference>
<dbReference type="ProteomicsDB" id="60411">
    <molecule id="Q15056-2"/>
</dbReference>
<dbReference type="Pumba" id="Q15056"/>
<dbReference type="TopDownProteomics" id="Q15056-1">
    <molecule id="Q15056-1"/>
</dbReference>
<dbReference type="TopDownProteomics" id="Q15056-2">
    <molecule id="Q15056-2"/>
</dbReference>
<dbReference type="Antibodypedia" id="14587">
    <property type="antibodies" value="213 antibodies from 29 providers"/>
</dbReference>
<dbReference type="DNASU" id="7458"/>
<dbReference type="Ensembl" id="ENST00000265753.13">
    <molecule id="Q15056-1"/>
    <property type="protein sequence ID" value="ENSP00000265753.8"/>
    <property type="gene ID" value="ENSG00000106682.16"/>
</dbReference>
<dbReference type="Ensembl" id="ENST00000353999.6">
    <molecule id="Q15056-2"/>
    <property type="protein sequence ID" value="ENSP00000265754.8"/>
    <property type="gene ID" value="ENSG00000106682.16"/>
</dbReference>
<dbReference type="Ensembl" id="ENST00000678438.1">
    <molecule id="Q15056-2"/>
    <property type="protein sequence ID" value="ENSP00000504679.1"/>
    <property type="gene ID" value="ENSG00000106682.16"/>
</dbReference>
<dbReference type="GeneID" id="7458"/>
<dbReference type="KEGG" id="hsa:7458"/>
<dbReference type="MANE-Select" id="ENST00000265753.13">
    <property type="protein sequence ID" value="ENSP00000265753.8"/>
    <property type="RefSeq nucleotide sequence ID" value="NM_022170.2"/>
    <property type="RefSeq protein sequence ID" value="NP_071496.1"/>
</dbReference>
<dbReference type="UCSC" id="uc003uad.2">
    <molecule id="Q15056-1"/>
    <property type="organism name" value="human"/>
</dbReference>
<dbReference type="AGR" id="HGNC:12741"/>
<dbReference type="CTD" id="7458"/>
<dbReference type="DisGeNET" id="7458"/>
<dbReference type="GeneCards" id="EIF4H"/>
<dbReference type="HGNC" id="HGNC:12741">
    <property type="gene designation" value="EIF4H"/>
</dbReference>
<dbReference type="HPA" id="ENSG00000106682">
    <property type="expression patterns" value="Low tissue specificity"/>
</dbReference>
<dbReference type="MalaCards" id="EIF4H"/>
<dbReference type="MIM" id="603431">
    <property type="type" value="gene"/>
</dbReference>
<dbReference type="neXtProt" id="NX_Q15056"/>
<dbReference type="OpenTargets" id="ENSG00000106682"/>
<dbReference type="Orphanet" id="904">
    <property type="disease" value="Williams syndrome"/>
</dbReference>
<dbReference type="PharmGKB" id="PA162384997"/>
<dbReference type="VEuPathDB" id="HostDB:ENSG00000106682"/>
<dbReference type="eggNOG" id="KOG0118">
    <property type="taxonomic scope" value="Eukaryota"/>
</dbReference>
<dbReference type="GeneTree" id="ENSGT00940000155414"/>
<dbReference type="HOGENOM" id="CLU_046195_1_0_1"/>
<dbReference type="InParanoid" id="Q15056"/>
<dbReference type="OMA" id="GPEDRGM"/>
<dbReference type="OrthoDB" id="48651at2759"/>
<dbReference type="PAN-GO" id="Q15056">
    <property type="GO annotations" value="5 GO annotations based on evolutionary models"/>
</dbReference>
<dbReference type="PhylomeDB" id="Q15056"/>
<dbReference type="TreeFam" id="TF313897"/>
<dbReference type="PathwayCommons" id="Q15056"/>
<dbReference type="Reactome" id="R-HSA-156827">
    <property type="pathway name" value="L13a-mediated translational silencing of Ceruloplasmin expression"/>
</dbReference>
<dbReference type="Reactome" id="R-HSA-72649">
    <property type="pathway name" value="Translation initiation complex formation"/>
</dbReference>
<dbReference type="Reactome" id="R-HSA-72662">
    <property type="pathway name" value="Activation of the mRNA upon binding of the cap-binding complex and eIFs, and subsequent binding to 43S"/>
</dbReference>
<dbReference type="Reactome" id="R-HSA-72702">
    <property type="pathway name" value="Ribosomal scanning and start codon recognition"/>
</dbReference>
<dbReference type="Reactome" id="R-HSA-72706">
    <property type="pathway name" value="GTP hydrolysis and joining of the 60S ribosomal subunit"/>
</dbReference>
<dbReference type="SignaLink" id="Q15056"/>
<dbReference type="SIGNOR" id="Q15056"/>
<dbReference type="BioGRID-ORCS" id="7458">
    <property type="hits" value="75 hits in 1158 CRISPR screens"/>
</dbReference>
<dbReference type="CD-CODE" id="DEE660B4">
    <property type="entry name" value="Stress granule"/>
</dbReference>
<dbReference type="ChiTaRS" id="EIF4H">
    <property type="organism name" value="human"/>
</dbReference>
<dbReference type="GeneWiki" id="EIF4H"/>
<dbReference type="GenomeRNAi" id="7458"/>
<dbReference type="Pharos" id="Q15056">
    <property type="development level" value="Tchem"/>
</dbReference>
<dbReference type="PRO" id="PR:Q15056"/>
<dbReference type="Proteomes" id="UP000005640">
    <property type="component" value="Chromosome 7"/>
</dbReference>
<dbReference type="RNAct" id="Q15056">
    <property type="molecule type" value="protein"/>
</dbReference>
<dbReference type="Bgee" id="ENSG00000106682">
    <property type="expression patterns" value="Expressed in parotid gland and 211 other cell types or tissues"/>
</dbReference>
<dbReference type="GO" id="GO:0005829">
    <property type="term" value="C:cytosol"/>
    <property type="evidence" value="ECO:0000304"/>
    <property type="project" value="Reactome"/>
</dbReference>
<dbReference type="GO" id="GO:0016281">
    <property type="term" value="C:eukaryotic translation initiation factor 4F complex"/>
    <property type="evidence" value="ECO:0000304"/>
    <property type="project" value="ProtInc"/>
</dbReference>
<dbReference type="GO" id="GO:0016020">
    <property type="term" value="C:membrane"/>
    <property type="evidence" value="ECO:0007005"/>
    <property type="project" value="UniProtKB"/>
</dbReference>
<dbReference type="GO" id="GO:0048471">
    <property type="term" value="C:perinuclear region of cytoplasm"/>
    <property type="evidence" value="ECO:0007669"/>
    <property type="project" value="UniProtKB-SubCell"/>
</dbReference>
<dbReference type="GO" id="GO:0045296">
    <property type="term" value="F:cadherin binding"/>
    <property type="evidence" value="ECO:0007005"/>
    <property type="project" value="BHF-UCL"/>
</dbReference>
<dbReference type="GO" id="GO:0043024">
    <property type="term" value="F:ribosomal small subunit binding"/>
    <property type="evidence" value="ECO:0000318"/>
    <property type="project" value="GO_Central"/>
</dbReference>
<dbReference type="GO" id="GO:0003723">
    <property type="term" value="F:RNA binding"/>
    <property type="evidence" value="ECO:0007005"/>
    <property type="project" value="UniProtKB"/>
</dbReference>
<dbReference type="GO" id="GO:0033592">
    <property type="term" value="F:RNA strand annealing activity"/>
    <property type="evidence" value="ECO:0000318"/>
    <property type="project" value="GO_Central"/>
</dbReference>
<dbReference type="GO" id="GO:0034057">
    <property type="term" value="F:RNA strand-exchange activity"/>
    <property type="evidence" value="ECO:0000318"/>
    <property type="project" value="GO_Central"/>
</dbReference>
<dbReference type="GO" id="GO:0008135">
    <property type="term" value="F:translation factor activity, RNA binding"/>
    <property type="evidence" value="ECO:0000304"/>
    <property type="project" value="ProtInc"/>
</dbReference>
<dbReference type="GO" id="GO:0003743">
    <property type="term" value="F:translation initiation factor activity"/>
    <property type="evidence" value="ECO:0000304"/>
    <property type="project" value="ProtInc"/>
</dbReference>
<dbReference type="GO" id="GO:0048589">
    <property type="term" value="P:developmental growth"/>
    <property type="evidence" value="ECO:0007669"/>
    <property type="project" value="Ensembl"/>
</dbReference>
<dbReference type="GO" id="GO:0097010">
    <property type="term" value="P:eukaryotic translation initiation factor 4F complex assembly"/>
    <property type="evidence" value="ECO:0000318"/>
    <property type="project" value="GO_Central"/>
</dbReference>
<dbReference type="GO" id="GO:0001731">
    <property type="term" value="P:formation of translation preinitiation complex"/>
    <property type="evidence" value="ECO:0000318"/>
    <property type="project" value="GO_Central"/>
</dbReference>
<dbReference type="GO" id="GO:0006446">
    <property type="term" value="P:regulation of translational initiation"/>
    <property type="evidence" value="ECO:0000304"/>
    <property type="project" value="ProtInc"/>
</dbReference>
<dbReference type="GO" id="GO:0019953">
    <property type="term" value="P:sexual reproduction"/>
    <property type="evidence" value="ECO:0007669"/>
    <property type="project" value="Ensembl"/>
</dbReference>
<dbReference type="CDD" id="cd12401">
    <property type="entry name" value="RRM_eIF4H"/>
    <property type="match status" value="1"/>
</dbReference>
<dbReference type="FunFam" id="3.30.70.330:FF:000115">
    <property type="entry name" value="eukaryotic translation initiation factor 4H"/>
    <property type="match status" value="1"/>
</dbReference>
<dbReference type="Gene3D" id="3.30.70.330">
    <property type="match status" value="1"/>
</dbReference>
<dbReference type="InterPro" id="IPR034229">
    <property type="entry name" value="eIF4H_RRM"/>
</dbReference>
<dbReference type="InterPro" id="IPR012677">
    <property type="entry name" value="Nucleotide-bd_a/b_plait_sf"/>
</dbReference>
<dbReference type="InterPro" id="IPR035979">
    <property type="entry name" value="RBD_domain_sf"/>
</dbReference>
<dbReference type="InterPro" id="IPR000504">
    <property type="entry name" value="RRM_dom"/>
</dbReference>
<dbReference type="PANTHER" id="PTHR23236">
    <property type="entry name" value="EUKARYOTIC TRANSLATION INITIATION FACTOR 4B/4H"/>
    <property type="match status" value="1"/>
</dbReference>
<dbReference type="PANTHER" id="PTHR23236:SF11">
    <property type="entry name" value="EUKARYOTIC TRANSLATION INITIATION FACTOR 4H"/>
    <property type="match status" value="1"/>
</dbReference>
<dbReference type="Pfam" id="PF00076">
    <property type="entry name" value="RRM_1"/>
    <property type="match status" value="1"/>
</dbReference>
<dbReference type="SMART" id="SM00360">
    <property type="entry name" value="RRM"/>
    <property type="match status" value="1"/>
</dbReference>
<dbReference type="SUPFAM" id="SSF54928">
    <property type="entry name" value="RNA-binding domain, RBD"/>
    <property type="match status" value="1"/>
</dbReference>
<dbReference type="PROSITE" id="PS50102">
    <property type="entry name" value="RRM"/>
    <property type="match status" value="1"/>
</dbReference>
<feature type="initiator methionine" description="Removed" evidence="8 15 19 20">
    <location>
        <position position="1"/>
    </location>
</feature>
<feature type="chain" id="PRO_0000081619" description="Eukaryotic translation initiation factor 4H">
    <location>
        <begin position="2"/>
        <end position="248"/>
    </location>
</feature>
<feature type="domain" description="RRM" evidence="3">
    <location>
        <begin position="42"/>
        <end position="118"/>
    </location>
</feature>
<feature type="region of interest" description="Disordered" evidence="4">
    <location>
        <begin position="1"/>
        <end position="41"/>
    </location>
</feature>
<feature type="region of interest" description="Disordered" evidence="4">
    <location>
        <begin position="121"/>
        <end position="248"/>
    </location>
</feature>
<feature type="region of interest" description="HHV-1 Vhs binding site">
    <location>
        <begin position="137"/>
        <end position="157"/>
    </location>
</feature>
<feature type="compositionally biased region" description="Gly residues" evidence="4">
    <location>
        <begin position="15"/>
        <end position="29"/>
    </location>
</feature>
<feature type="compositionally biased region" description="Basic and acidic residues" evidence="4">
    <location>
        <begin position="131"/>
        <end position="163"/>
    </location>
</feature>
<feature type="compositionally biased region" description="Basic and acidic residues" evidence="4">
    <location>
        <begin position="196"/>
        <end position="207"/>
    </location>
</feature>
<feature type="compositionally biased region" description="Polar residues" evidence="4">
    <location>
        <begin position="220"/>
        <end position="230"/>
    </location>
</feature>
<feature type="compositionally biased region" description="Basic and acidic residues" evidence="4">
    <location>
        <begin position="237"/>
        <end position="248"/>
    </location>
</feature>
<feature type="modified residue" description="N-acetylalanine" evidence="8 15 19 20">
    <location>
        <position position="2"/>
    </location>
</feature>
<feature type="modified residue" description="Phosphoserine" evidence="21">
    <location>
        <position position="13"/>
    </location>
</feature>
<feature type="modified residue" description="Phosphoserine" evidence="21">
    <location>
        <position position="14"/>
    </location>
</feature>
<feature type="modified residue" description="Omega-N-methylarginine" evidence="2">
    <location>
        <position position="19"/>
    </location>
</feature>
<feature type="modified residue" description="Phosphoserine" evidence="17 18 21">
    <location>
        <position position="21"/>
    </location>
</feature>
<feature type="modified residue" description="Omega-N-methylarginine" evidence="2">
    <location>
        <position position="22"/>
    </location>
</feature>
<feature type="modified residue" description="Phosphoserine" evidence="17 18 21">
    <location>
        <position position="24"/>
    </location>
</feature>
<feature type="modified residue" description="Phosphoserine" evidence="16">
    <location>
        <position position="32"/>
    </location>
</feature>
<feature type="modified residue" description="Omega-N-methylarginine" evidence="2">
    <location>
        <position position="136"/>
    </location>
</feature>
<feature type="modified residue" description="Omega-N-methylarginine" evidence="22">
    <location>
        <position position="166"/>
    </location>
</feature>
<feature type="modified residue" description="Omega-N-methylarginine" evidence="2">
    <location>
        <position position="175"/>
    </location>
</feature>
<feature type="modified residue" description="Phosphoserine" evidence="21">
    <location>
        <position position="230"/>
    </location>
</feature>
<feature type="splice variant" id="VSP_005799" description="In isoform Short." evidence="11 12 13">
    <location>
        <begin position="137"/>
        <end position="156"/>
    </location>
</feature>
<keyword id="KW-0007">Acetylation</keyword>
<keyword id="KW-0025">Alternative splicing</keyword>
<keyword id="KW-0963">Cytoplasm</keyword>
<keyword id="KW-0903">Direct protein sequencing</keyword>
<keyword id="KW-0945">Host-virus interaction</keyword>
<keyword id="KW-0396">Initiation factor</keyword>
<keyword id="KW-0488">Methylation</keyword>
<keyword id="KW-0597">Phosphoprotein</keyword>
<keyword id="KW-0648">Protein biosynthesis</keyword>
<keyword id="KW-1267">Proteomics identification</keyword>
<keyword id="KW-1185">Reference proteome</keyword>
<keyword id="KW-0694">RNA-binding</keyword>
<keyword id="KW-0856">Williams-Beuren syndrome</keyword>
<sequence length="248" mass="27385">MADFDTYDDRAYSSFGGGRGSRGSAGGHGSRSQKELPTEPPYTAYVGNLPFNTVQGDIDAIFKDLSIRSVRLVRDKDTDKFKGFCYVEFDEVDSLKEALTYDGALLGDRSLRVDIAEGRKQDKGGFGFRKGGPDDRGMGSSRESRGGWDSRDDFNSGFRDDFLGGRGGSRPGDRRTGPPMGSRFRDGPPLRGSNMDFREPTEEERAQRPRLQLKPRTVATPLNQVANPNSAIFGGARPREEVVQKEQE</sequence>
<proteinExistence type="evidence at protein level"/>
<protein>
    <recommendedName>
        <fullName>Eukaryotic translation initiation factor 4H</fullName>
        <shortName>eIF-4H</shortName>
    </recommendedName>
    <alternativeName>
        <fullName>Williams-Beuren syndrome chromosomal region 1 protein</fullName>
    </alternativeName>
</protein>
<comment type="function">
    <text evidence="5 7">Stimulates the RNA helicase activity of EIF4A in the translation initiation complex. Binds weakly mRNA.</text>
</comment>
<comment type="subunit">
    <text evidence="9">(Microbial infection) Interacts with HHV-1 Vhs.</text>
</comment>
<comment type="interaction">
    <interactant intactId="EBI-748492">
        <id>Q15056</id>
    </interactant>
    <interactant intactId="EBI-721765">
        <id>Q9H3H3</id>
        <label>C11orf68</label>
    </interactant>
    <organismsDiffer>false</organismsDiffer>
    <experiments>5</experiments>
</comment>
<comment type="interaction">
    <interactant intactId="EBI-748492">
        <id>Q15056</id>
    </interactant>
    <interactant intactId="EBI-73449">
        <id>P60842</id>
        <label>EIF4A1</label>
    </interactant>
    <organismsDiffer>false</organismsDiffer>
    <experiments>2</experiments>
</comment>
<comment type="interaction">
    <interactant intactId="EBI-748492">
        <id>Q15056</id>
    </interactant>
    <interactant intactId="EBI-739832">
        <id>Q8TBB1</id>
        <label>LNX1</label>
    </interactant>
    <organismsDiffer>false</organismsDiffer>
    <experiments>4</experiments>
</comment>
<comment type="interaction">
    <interactant intactId="EBI-12222405">
        <id>Q15056-2</id>
    </interactant>
    <interactant intactId="EBI-12002214">
        <id>Q9H3H3-3</id>
        <label>C11orf68</label>
    </interactant>
    <organismsDiffer>false</organismsDiffer>
    <experiments>8</experiments>
</comment>
<comment type="interaction">
    <interactant intactId="EBI-12222405">
        <id>Q15056-2</id>
    </interactant>
    <interactant intactId="EBI-742054">
        <id>Q96D03</id>
        <label>DDIT4L</label>
    </interactant>
    <organismsDiffer>false</organismsDiffer>
    <experiments>3</experiments>
</comment>
<comment type="interaction">
    <interactant intactId="EBI-12222405">
        <id>Q15056-2</id>
    </interactant>
    <interactant intactId="EBI-80440">
        <id>Q92796</id>
        <label>DLG3</label>
    </interactant>
    <organismsDiffer>false</organismsDiffer>
    <experiments>3</experiments>
</comment>
<comment type="interaction">
    <interactant intactId="EBI-12222405">
        <id>Q15056-2</id>
    </interactant>
    <interactant intactId="EBI-2510157">
        <id>Q96EF6</id>
        <label>FBXO17</label>
    </interactant>
    <organismsDiffer>false</organismsDiffer>
    <experiments>3</experiments>
</comment>
<comment type="interaction">
    <interactant intactId="EBI-12222405">
        <id>Q15056-2</id>
    </interactant>
    <interactant intactId="EBI-79165">
        <id>Q9NRD5</id>
        <label>PICK1</label>
    </interactant>
    <organismsDiffer>false</organismsDiffer>
    <experiments>3</experiments>
</comment>
<comment type="interaction">
    <interactant intactId="EBI-12222405">
        <id>Q15056-2</id>
    </interactant>
    <interactant intactId="EBI-742688">
        <id>Q9NZD8</id>
        <label>SPG21</label>
    </interactant>
    <organismsDiffer>false</organismsDiffer>
    <experiments>6</experiments>
</comment>
<comment type="subcellular location">
    <subcellularLocation>
        <location evidence="1">Cytoplasm</location>
        <location evidence="1">Perinuclear region</location>
    </subcellularLocation>
</comment>
<comment type="alternative products">
    <event type="alternative splicing"/>
    <isoform>
        <id>Q15056-1</id>
        <name>Long</name>
        <sequence type="displayed"/>
    </isoform>
    <isoform>
        <id>Q15056-2</id>
        <name>Short</name>
        <sequence type="described" ref="VSP_005799"/>
    </isoform>
</comment>
<comment type="tissue specificity">
    <text evidence="6 10">The short isoform is the predominant isoform and is expressed alone in liver and skeletal muscle. Both isoforms are expressed in fibroblast, spleen, testis and bone marrow. Levels are high in lung and pancreas and low in heart, frontal cortex and kidney.</text>
</comment>
<comment type="disease">
    <text evidence="10">EIF4H is located in the Williams-Beuren syndrome (WBS) critical region. WBS results from a hemizygous deletion of several genes on chromosome 7q11.23, thought to arise as a consequence of unequal crossing over between highly homologous low-copy repeat sequences flanking the deleted region. Haploinsufficiency of EIF4H may be the cause of certain cardiovascular and musculo-skeletal abnormalities observed in the disease.</text>
</comment>
<comment type="sequence caution" evidence="14">
    <conflict type="erroneous initiation">
        <sequence resource="EMBL-CDS" id="BAA05063"/>
    </conflict>
</comment>
<evidence type="ECO:0000250" key="1"/>
<evidence type="ECO:0000250" key="2">
    <source>
        <dbReference type="UniProtKB" id="Q9WUK2"/>
    </source>
</evidence>
<evidence type="ECO:0000255" key="3">
    <source>
        <dbReference type="PROSITE-ProRule" id="PRU00176"/>
    </source>
</evidence>
<evidence type="ECO:0000256" key="4">
    <source>
        <dbReference type="SAM" id="MobiDB-lite"/>
    </source>
</evidence>
<evidence type="ECO:0000269" key="5">
    <source>
    </source>
</evidence>
<evidence type="ECO:0000269" key="6">
    <source>
    </source>
</evidence>
<evidence type="ECO:0000269" key="7">
    <source>
    </source>
</evidence>
<evidence type="ECO:0000269" key="8">
    <source>
    </source>
</evidence>
<evidence type="ECO:0000269" key="9">
    <source>
    </source>
</evidence>
<evidence type="ECO:0000269" key="10">
    <source>
    </source>
</evidence>
<evidence type="ECO:0000303" key="11">
    <source>
    </source>
</evidence>
<evidence type="ECO:0000303" key="12">
    <source>
    </source>
</evidence>
<evidence type="ECO:0000303" key="13">
    <source>
    </source>
</evidence>
<evidence type="ECO:0000305" key="14"/>
<evidence type="ECO:0007744" key="15">
    <source>
    </source>
</evidence>
<evidence type="ECO:0007744" key="16">
    <source>
    </source>
</evidence>
<evidence type="ECO:0007744" key="17">
    <source>
    </source>
</evidence>
<evidence type="ECO:0007744" key="18">
    <source>
    </source>
</evidence>
<evidence type="ECO:0007744" key="19">
    <source>
    </source>
</evidence>
<evidence type="ECO:0007744" key="20">
    <source>
    </source>
</evidence>
<evidence type="ECO:0007744" key="21">
    <source>
    </source>
</evidence>
<evidence type="ECO:0007744" key="22">
    <source>
    </source>
</evidence>